<organism>
    <name type="scientific">Escherichia coli O6:H1 (strain CFT073 / ATCC 700928 / UPEC)</name>
    <dbReference type="NCBI Taxonomy" id="199310"/>
    <lineage>
        <taxon>Bacteria</taxon>
        <taxon>Pseudomonadati</taxon>
        <taxon>Pseudomonadota</taxon>
        <taxon>Gammaproteobacteria</taxon>
        <taxon>Enterobacterales</taxon>
        <taxon>Enterobacteriaceae</taxon>
        <taxon>Escherichia</taxon>
    </lineage>
</organism>
<keyword id="KW-1005">Bacterial flagellum biogenesis</keyword>
<keyword id="KW-0143">Chaperone</keyword>
<keyword id="KW-0963">Cytoplasm</keyword>
<keyword id="KW-1185">Reference proteome</keyword>
<keyword id="KW-0678">Repressor</keyword>
<keyword id="KW-0804">Transcription</keyword>
<keyword id="KW-0805">Transcription regulation</keyword>
<sequence length="121" mass="13743">MNNAPHLYFAWQQLVEKSQLMLRLATEEQWDELIASEMAYVNAVQEIAHLTEEVAPSTTMQEQLRPMLHLILDNESKVKQLLQIRMDELAKLVGQSSVQKSVLSAYGDQGGFVLAPQDNLF</sequence>
<gene>
    <name evidence="1" type="primary">fliT</name>
    <name type="ordered locus">c2341</name>
</gene>
<evidence type="ECO:0000255" key="1">
    <source>
        <dbReference type="HAMAP-Rule" id="MF_01180"/>
    </source>
</evidence>
<reference key="1">
    <citation type="journal article" date="2002" name="Proc. Natl. Acad. Sci. U.S.A.">
        <title>Extensive mosaic structure revealed by the complete genome sequence of uropathogenic Escherichia coli.</title>
        <authorList>
            <person name="Welch R.A."/>
            <person name="Burland V."/>
            <person name="Plunkett G. III"/>
            <person name="Redford P."/>
            <person name="Roesch P."/>
            <person name="Rasko D."/>
            <person name="Buckles E.L."/>
            <person name="Liou S.-R."/>
            <person name="Boutin A."/>
            <person name="Hackett J."/>
            <person name="Stroud D."/>
            <person name="Mayhew G.F."/>
            <person name="Rose D.J."/>
            <person name="Zhou S."/>
            <person name="Schwartz D.C."/>
            <person name="Perna N.T."/>
            <person name="Mobley H.L.T."/>
            <person name="Donnenberg M.S."/>
            <person name="Blattner F.R."/>
        </authorList>
    </citation>
    <scope>NUCLEOTIDE SEQUENCE [LARGE SCALE GENOMIC DNA]</scope>
    <source>
        <strain>CFT073 / ATCC 700928 / UPEC</strain>
    </source>
</reference>
<name>FLIT_ECOL6</name>
<dbReference type="EMBL" id="AE014075">
    <property type="protein sequence ID" value="AAN80800.1"/>
    <property type="molecule type" value="Genomic_DNA"/>
</dbReference>
<dbReference type="RefSeq" id="WP_001057836.1">
    <property type="nucleotide sequence ID" value="NZ_CP051263.1"/>
</dbReference>
<dbReference type="SMR" id="Q8FGL9"/>
<dbReference type="STRING" id="199310.c2341"/>
<dbReference type="KEGG" id="ecc:c2341"/>
<dbReference type="eggNOG" id="ENOG5032ZV7">
    <property type="taxonomic scope" value="Bacteria"/>
</dbReference>
<dbReference type="HOGENOM" id="CLU_155793_1_1_6"/>
<dbReference type="BioCyc" id="ECOL199310:C2341-MONOMER"/>
<dbReference type="Proteomes" id="UP000001410">
    <property type="component" value="Chromosome"/>
</dbReference>
<dbReference type="GO" id="GO:0005829">
    <property type="term" value="C:cytosol"/>
    <property type="evidence" value="ECO:0007669"/>
    <property type="project" value="UniProtKB-SubCell"/>
</dbReference>
<dbReference type="GO" id="GO:0044781">
    <property type="term" value="P:bacterial-type flagellum organization"/>
    <property type="evidence" value="ECO:0007669"/>
    <property type="project" value="UniProtKB-KW"/>
</dbReference>
<dbReference type="GO" id="GO:1902209">
    <property type="term" value="P:negative regulation of bacterial-type flagellum assembly"/>
    <property type="evidence" value="ECO:0007669"/>
    <property type="project" value="UniProtKB-UniRule"/>
</dbReference>
<dbReference type="GO" id="GO:0006457">
    <property type="term" value="P:protein folding"/>
    <property type="evidence" value="ECO:0007669"/>
    <property type="project" value="UniProtKB-UniRule"/>
</dbReference>
<dbReference type="FunFam" id="1.20.58.380:FF:000001">
    <property type="entry name" value="Flagellar protein FliT"/>
    <property type="match status" value="1"/>
</dbReference>
<dbReference type="Gene3D" id="1.20.58.380">
    <property type="entry name" value="Flagellar protein flit"/>
    <property type="match status" value="1"/>
</dbReference>
<dbReference type="HAMAP" id="MF_01180">
    <property type="entry name" value="FliT"/>
    <property type="match status" value="1"/>
</dbReference>
<dbReference type="InterPro" id="IPR008622">
    <property type="entry name" value="FliT"/>
</dbReference>
<dbReference type="NCBIfam" id="NF007836">
    <property type="entry name" value="PRK10548.1"/>
    <property type="match status" value="1"/>
</dbReference>
<dbReference type="Pfam" id="PF05400">
    <property type="entry name" value="FliT"/>
    <property type="match status" value="1"/>
</dbReference>
<accession>Q8FGL9</accession>
<feature type="chain" id="PRO_0000353883" description="Flagellar protein FliT">
    <location>
        <begin position="1"/>
        <end position="121"/>
    </location>
</feature>
<feature type="region of interest" description="Required for homodimerization" evidence="1">
    <location>
        <begin position="1"/>
        <end position="50"/>
    </location>
</feature>
<feature type="region of interest" description="FliD binding" evidence="1">
    <location>
        <begin position="60"/>
        <end position="98"/>
    </location>
</feature>
<comment type="function">
    <text evidence="1">Dual-function protein that regulates the transcription of class 2 flagellar operons and that also acts as an export chaperone for the filament-capping protein FliD. As a transcriptional regulator, acts as an anti-FlhDC factor; it directly binds FlhC, thus inhibiting the binding of the FlhC/FlhD complex to class 2 promoters, resulting in decreased expression of class 2 flagellar operons. As a chaperone, effects FliD transition to the membrane by preventing its premature polymerization, and by directing it to the export apparatus.</text>
</comment>
<comment type="subunit">
    <text evidence="1">Homodimer. Interacts with FliD and FlhC.</text>
</comment>
<comment type="subcellular location">
    <subcellularLocation>
        <location evidence="1">Cytoplasm</location>
        <location evidence="1">Cytosol</location>
    </subcellularLocation>
</comment>
<comment type="similarity">
    <text evidence="1">Belongs to the FliT family.</text>
</comment>
<proteinExistence type="inferred from homology"/>
<protein>
    <recommendedName>
        <fullName evidence="1">Flagellar protein FliT</fullName>
    </recommendedName>
</protein>